<proteinExistence type="inferred from homology"/>
<sequence>MGRAFEYRRAAKEARWDKMSKVFPKLAKAITVAAKDGGCDPDMNPKLRAAIAAAKAENMPKDNIDAAIKRANGKDSADIKTIFYDGKAAHGVQIIVECATDNPTRTVANVKAIFSKNGGEILPSGSLSFMFTRKSVFELEKPSANIEEIELELIDYGLSDIEEDENALFVYGDYANFGTLHEGIEKLNLVVKKASLQYLPNQTVSLDEEQMLEVERLLDKLEDDDDVQAVYTNIE</sequence>
<name>Y494_CAMC1</name>
<comment type="subcellular location">
    <subcellularLocation>
        <location evidence="1">Cytoplasm</location>
    </subcellularLocation>
</comment>
<comment type="similarity">
    <text evidence="1">Belongs to the TACO1 family.</text>
</comment>
<dbReference type="EMBL" id="CP000792">
    <property type="protein sequence ID" value="EAT98974.1"/>
    <property type="molecule type" value="Genomic_DNA"/>
</dbReference>
<dbReference type="RefSeq" id="WP_012001371.1">
    <property type="nucleotide sequence ID" value="NC_009802.2"/>
</dbReference>
<dbReference type="SMR" id="A7ZC85"/>
<dbReference type="STRING" id="360104.CCC13826_1514"/>
<dbReference type="KEGG" id="cco:CCC13826_1514"/>
<dbReference type="eggNOG" id="COG0217">
    <property type="taxonomic scope" value="Bacteria"/>
</dbReference>
<dbReference type="HOGENOM" id="CLU_062974_2_2_7"/>
<dbReference type="OrthoDB" id="9781053at2"/>
<dbReference type="Proteomes" id="UP000001121">
    <property type="component" value="Chromosome"/>
</dbReference>
<dbReference type="GO" id="GO:0005829">
    <property type="term" value="C:cytosol"/>
    <property type="evidence" value="ECO:0007669"/>
    <property type="project" value="TreeGrafter"/>
</dbReference>
<dbReference type="GO" id="GO:0003677">
    <property type="term" value="F:DNA binding"/>
    <property type="evidence" value="ECO:0007669"/>
    <property type="project" value="UniProtKB-UniRule"/>
</dbReference>
<dbReference type="GO" id="GO:0006355">
    <property type="term" value="P:regulation of DNA-templated transcription"/>
    <property type="evidence" value="ECO:0007669"/>
    <property type="project" value="UniProtKB-UniRule"/>
</dbReference>
<dbReference type="FunFam" id="1.10.10.200:FF:000004">
    <property type="entry name" value="Probable transcriptional regulatory protein BSBG_02618"/>
    <property type="match status" value="1"/>
</dbReference>
<dbReference type="Gene3D" id="1.10.10.200">
    <property type="match status" value="1"/>
</dbReference>
<dbReference type="Gene3D" id="3.30.70.980">
    <property type="match status" value="2"/>
</dbReference>
<dbReference type="HAMAP" id="MF_00693">
    <property type="entry name" value="Transcrip_reg_TACO1"/>
    <property type="match status" value="1"/>
</dbReference>
<dbReference type="InterPro" id="IPR017856">
    <property type="entry name" value="Integrase-like_N"/>
</dbReference>
<dbReference type="InterPro" id="IPR048300">
    <property type="entry name" value="TACO1_YebC-like_2nd/3rd_dom"/>
</dbReference>
<dbReference type="InterPro" id="IPR049083">
    <property type="entry name" value="TACO1_YebC_N"/>
</dbReference>
<dbReference type="InterPro" id="IPR002876">
    <property type="entry name" value="Transcrip_reg_TACO1-like"/>
</dbReference>
<dbReference type="InterPro" id="IPR026564">
    <property type="entry name" value="Transcrip_reg_TACO1-like_dom3"/>
</dbReference>
<dbReference type="InterPro" id="IPR029072">
    <property type="entry name" value="YebC-like"/>
</dbReference>
<dbReference type="NCBIfam" id="NF009044">
    <property type="entry name" value="PRK12378.1"/>
    <property type="match status" value="1"/>
</dbReference>
<dbReference type="NCBIfam" id="TIGR01033">
    <property type="entry name" value="YebC/PmpR family DNA-binding transcriptional regulator"/>
    <property type="match status" value="1"/>
</dbReference>
<dbReference type="PANTHER" id="PTHR12532:SF6">
    <property type="entry name" value="TRANSCRIPTIONAL REGULATORY PROTEIN YEBC-RELATED"/>
    <property type="match status" value="1"/>
</dbReference>
<dbReference type="PANTHER" id="PTHR12532">
    <property type="entry name" value="TRANSLATIONAL ACTIVATOR OF CYTOCHROME C OXIDASE 1"/>
    <property type="match status" value="1"/>
</dbReference>
<dbReference type="Pfam" id="PF20772">
    <property type="entry name" value="TACO1_YebC_N"/>
    <property type="match status" value="1"/>
</dbReference>
<dbReference type="Pfam" id="PF01709">
    <property type="entry name" value="Transcrip_reg"/>
    <property type="match status" value="1"/>
</dbReference>
<dbReference type="SUPFAM" id="SSF75625">
    <property type="entry name" value="YebC-like"/>
    <property type="match status" value="1"/>
</dbReference>
<organism>
    <name type="scientific">Campylobacter concisus (strain 13826)</name>
    <dbReference type="NCBI Taxonomy" id="360104"/>
    <lineage>
        <taxon>Bacteria</taxon>
        <taxon>Pseudomonadati</taxon>
        <taxon>Campylobacterota</taxon>
        <taxon>Epsilonproteobacteria</taxon>
        <taxon>Campylobacterales</taxon>
        <taxon>Campylobacteraceae</taxon>
        <taxon>Campylobacter</taxon>
    </lineage>
</organism>
<feature type="chain" id="PRO_1000045289" description="Probable transcriptional regulatory protein Ccon26_04940">
    <location>
        <begin position="1"/>
        <end position="235"/>
    </location>
</feature>
<reference key="1">
    <citation type="submission" date="2007-10" db="EMBL/GenBank/DDBJ databases">
        <title>Genome sequence of Campylobacter concisus 13826 isolated from human feces.</title>
        <authorList>
            <person name="Fouts D.E."/>
            <person name="Mongodin E.F."/>
            <person name="Puiu D."/>
            <person name="Sebastian Y."/>
            <person name="Miller W.G."/>
            <person name="Mandrell R.E."/>
            <person name="On S."/>
            <person name="Nelson K.E."/>
        </authorList>
    </citation>
    <scope>NUCLEOTIDE SEQUENCE [LARGE SCALE GENOMIC DNA]</scope>
    <source>
        <strain>13826</strain>
    </source>
</reference>
<evidence type="ECO:0000255" key="1">
    <source>
        <dbReference type="HAMAP-Rule" id="MF_00693"/>
    </source>
</evidence>
<accession>A7ZC85</accession>
<keyword id="KW-0963">Cytoplasm</keyword>
<keyword id="KW-0238">DNA-binding</keyword>
<keyword id="KW-0804">Transcription</keyword>
<keyword id="KW-0805">Transcription regulation</keyword>
<gene>
    <name type="ordered locus">Ccon26_04940</name>
    <name type="ORF">CCC13826_1514</name>
</gene>
<protein>
    <recommendedName>
        <fullName evidence="1">Probable transcriptional regulatory protein Ccon26_04940</fullName>
    </recommendedName>
</protein>